<organism>
    <name type="scientific">Dioscorea elephantipes</name>
    <name type="common">Elephant's foot yam</name>
    <name type="synonym">Testudinaria elephantipes</name>
    <dbReference type="NCBI Taxonomy" id="145284"/>
    <lineage>
        <taxon>Eukaryota</taxon>
        <taxon>Viridiplantae</taxon>
        <taxon>Streptophyta</taxon>
        <taxon>Embryophyta</taxon>
        <taxon>Tracheophyta</taxon>
        <taxon>Spermatophyta</taxon>
        <taxon>Magnoliopsida</taxon>
        <taxon>Liliopsida</taxon>
        <taxon>Dioscoreales</taxon>
        <taxon>Dioscoreaceae</taxon>
        <taxon>Dioscorea</taxon>
    </lineage>
</organism>
<feature type="signal peptide" evidence="2">
    <location>
        <begin position="1"/>
        <end position="35"/>
    </location>
</feature>
<feature type="chain" id="PRO_0000342061" description="Cytochrome f">
    <location>
        <begin position="36"/>
        <end position="320"/>
    </location>
</feature>
<feature type="transmembrane region" description="Helical" evidence="2">
    <location>
        <begin position="286"/>
        <end position="306"/>
    </location>
</feature>
<feature type="binding site" description="axial binding residue" evidence="2">
    <location>
        <position position="36"/>
    </location>
    <ligand>
        <name>heme</name>
        <dbReference type="ChEBI" id="CHEBI:30413"/>
    </ligand>
    <ligandPart>
        <name>Fe</name>
        <dbReference type="ChEBI" id="CHEBI:18248"/>
    </ligandPart>
</feature>
<feature type="binding site" description="covalent" evidence="2">
    <location>
        <position position="56"/>
    </location>
    <ligand>
        <name>heme</name>
        <dbReference type="ChEBI" id="CHEBI:30413"/>
    </ligand>
</feature>
<feature type="binding site" description="covalent" evidence="2">
    <location>
        <position position="59"/>
    </location>
    <ligand>
        <name>heme</name>
        <dbReference type="ChEBI" id="CHEBI:30413"/>
    </ligand>
</feature>
<feature type="binding site" description="axial binding residue" evidence="2">
    <location>
        <position position="60"/>
    </location>
    <ligand>
        <name>heme</name>
        <dbReference type="ChEBI" id="CHEBI:30413"/>
    </ligand>
    <ligandPart>
        <name>Fe</name>
        <dbReference type="ChEBI" id="CHEBI:18248"/>
    </ligandPart>
</feature>
<proteinExistence type="inferred from homology"/>
<accession>A6MMM0</accession>
<geneLocation type="chloroplast"/>
<sequence length="320" mass="35270">MQNRNTFLGVKEQITRSIFVSIMIYVITRASISNAYPIFAQQGYENPREATGRIVCANCHLASKPVDIEVPQAVLPDTVFEAVVRIPYDMQLKQVLANGKKGALNVGAVLILPEGFELAPPDRISPEVKEKMGNLSFQNYRPNKKNIIVIGPAPGQKYSEIVFPILSPDPATKKDVHFLKYPIYVGGNRGRGQIYPDGSKSNNTVYNATSAGIVSKIVRKEKGGYEITIIDASDGHQVVDIIPRGPELLVSEGESIKLDQPLTSNPNVGGFGQGDAEIVLQDPLRIQGLLFFLASVILAQIFLVLKKKQFEKVQLYEMNF</sequence>
<comment type="function">
    <text evidence="2">Component of the cytochrome b6-f complex, which mediates electron transfer between photosystem II (PSII) and photosystem I (PSI), cyclic electron flow around PSI, and state transitions.</text>
</comment>
<comment type="cofactor">
    <cofactor evidence="2">
        <name>heme</name>
        <dbReference type="ChEBI" id="CHEBI:30413"/>
    </cofactor>
    <text evidence="2">Binds 1 heme group covalently.</text>
</comment>
<comment type="subunit">
    <text evidence="1">The 4 large subunits of the cytochrome b6-f complex are cytochrome b6, subunit IV (17 kDa polypeptide, petD), cytochrome f and the Rieske protein, while the 4 small subunits are PetG, PetL, PetM and PetN. The complex functions as a dimer (By similarity).</text>
</comment>
<comment type="subcellular location">
    <subcellularLocation>
        <location evidence="2">Plastid</location>
        <location evidence="2">Chloroplast thylakoid membrane</location>
        <topology evidence="2">Single-pass membrane protein</topology>
    </subcellularLocation>
</comment>
<comment type="similarity">
    <text evidence="2">Belongs to the cytochrome f family.</text>
</comment>
<dbReference type="EMBL" id="EF380353">
    <property type="protein sequence ID" value="ABR01443.1"/>
    <property type="molecule type" value="Genomic_DNA"/>
</dbReference>
<dbReference type="RefSeq" id="YP_001294365.1">
    <property type="nucleotide sequence ID" value="NC_009601.1"/>
</dbReference>
<dbReference type="SMR" id="A6MMM0"/>
<dbReference type="GeneID" id="5236578"/>
<dbReference type="GO" id="GO:0009535">
    <property type="term" value="C:chloroplast thylakoid membrane"/>
    <property type="evidence" value="ECO:0007669"/>
    <property type="project" value="UniProtKB-SubCell"/>
</dbReference>
<dbReference type="GO" id="GO:0009055">
    <property type="term" value="F:electron transfer activity"/>
    <property type="evidence" value="ECO:0007669"/>
    <property type="project" value="UniProtKB-UniRule"/>
</dbReference>
<dbReference type="GO" id="GO:0020037">
    <property type="term" value="F:heme binding"/>
    <property type="evidence" value="ECO:0007669"/>
    <property type="project" value="InterPro"/>
</dbReference>
<dbReference type="GO" id="GO:0005506">
    <property type="term" value="F:iron ion binding"/>
    <property type="evidence" value="ECO:0007669"/>
    <property type="project" value="InterPro"/>
</dbReference>
<dbReference type="GO" id="GO:0015979">
    <property type="term" value="P:photosynthesis"/>
    <property type="evidence" value="ECO:0007669"/>
    <property type="project" value="UniProtKB-UniRule"/>
</dbReference>
<dbReference type="FunFam" id="1.20.5.700:FF:000001">
    <property type="entry name" value="Cytochrome f"/>
    <property type="match status" value="1"/>
</dbReference>
<dbReference type="FunFam" id="2.40.50.100:FF:000007">
    <property type="entry name" value="Cytochrome f"/>
    <property type="match status" value="1"/>
</dbReference>
<dbReference type="FunFam" id="2.60.40.830:FF:000001">
    <property type="entry name" value="Cytochrome f"/>
    <property type="match status" value="1"/>
</dbReference>
<dbReference type="Gene3D" id="2.40.50.100">
    <property type="match status" value="1"/>
</dbReference>
<dbReference type="Gene3D" id="2.60.40.830">
    <property type="entry name" value="Cytochrome f large domain"/>
    <property type="match status" value="1"/>
</dbReference>
<dbReference type="Gene3D" id="1.20.5.700">
    <property type="entry name" value="Single helix bin"/>
    <property type="match status" value="1"/>
</dbReference>
<dbReference type="HAMAP" id="MF_00610">
    <property type="entry name" value="Cytb6_f_cytF"/>
    <property type="match status" value="1"/>
</dbReference>
<dbReference type="InterPro" id="IPR024058">
    <property type="entry name" value="Cyt-f_TM"/>
</dbReference>
<dbReference type="InterPro" id="IPR002325">
    <property type="entry name" value="Cyt_f"/>
</dbReference>
<dbReference type="InterPro" id="IPR024094">
    <property type="entry name" value="Cyt_f_lg_dom"/>
</dbReference>
<dbReference type="InterPro" id="IPR036826">
    <property type="entry name" value="Cyt_f_lg_dom_sf"/>
</dbReference>
<dbReference type="InterPro" id="IPR011054">
    <property type="entry name" value="Rudment_hybrid_motif"/>
</dbReference>
<dbReference type="PANTHER" id="PTHR33288">
    <property type="match status" value="1"/>
</dbReference>
<dbReference type="PANTHER" id="PTHR33288:SF10">
    <property type="entry name" value="CYTOCHROME F"/>
    <property type="match status" value="1"/>
</dbReference>
<dbReference type="Pfam" id="PF01333">
    <property type="entry name" value="Apocytochr_F_C"/>
    <property type="match status" value="1"/>
</dbReference>
<dbReference type="Pfam" id="PF16639">
    <property type="entry name" value="Apocytochr_F_N"/>
    <property type="match status" value="1"/>
</dbReference>
<dbReference type="PRINTS" id="PR00610">
    <property type="entry name" value="CYTOCHROMEF"/>
</dbReference>
<dbReference type="SUPFAM" id="SSF103431">
    <property type="entry name" value="Cytochrome f subunit of the cytochrome b6f complex, transmembrane anchor"/>
    <property type="match status" value="1"/>
</dbReference>
<dbReference type="SUPFAM" id="SSF49441">
    <property type="entry name" value="Cytochrome f, large domain"/>
    <property type="match status" value="1"/>
</dbReference>
<dbReference type="SUPFAM" id="SSF51246">
    <property type="entry name" value="Rudiment single hybrid motif"/>
    <property type="match status" value="1"/>
</dbReference>
<dbReference type="PROSITE" id="PS51010">
    <property type="entry name" value="CYTF"/>
    <property type="match status" value="1"/>
</dbReference>
<evidence type="ECO:0000250" key="1"/>
<evidence type="ECO:0000255" key="2">
    <source>
        <dbReference type="HAMAP-Rule" id="MF_00610"/>
    </source>
</evidence>
<protein>
    <recommendedName>
        <fullName evidence="2">Cytochrome f</fullName>
    </recommendedName>
</protein>
<keyword id="KW-0150">Chloroplast</keyword>
<keyword id="KW-0249">Electron transport</keyword>
<keyword id="KW-0349">Heme</keyword>
<keyword id="KW-0408">Iron</keyword>
<keyword id="KW-0472">Membrane</keyword>
<keyword id="KW-0479">Metal-binding</keyword>
<keyword id="KW-0602">Photosynthesis</keyword>
<keyword id="KW-0934">Plastid</keyword>
<keyword id="KW-0732">Signal</keyword>
<keyword id="KW-0793">Thylakoid</keyword>
<keyword id="KW-0812">Transmembrane</keyword>
<keyword id="KW-1133">Transmembrane helix</keyword>
<keyword id="KW-0813">Transport</keyword>
<name>CYF_DIOEL</name>
<gene>
    <name evidence="2" type="primary">petA</name>
</gene>
<reference key="1">
    <citation type="journal article" date="2007" name="Mol. Phylogenet. Evol.">
        <title>Phylogenetic and evolutionary implications of complete chloroplast genome sequences of four early-diverging angiosperms: Buxus (Buxaceae), Chloranthus (Chloranthaceae), Dioscorea (Dioscoreaceae), and Illicium (Schisandraceae).</title>
        <authorList>
            <person name="Hansen D.R."/>
            <person name="Dastidar S.G."/>
            <person name="Cai Z."/>
            <person name="Penaflor C."/>
            <person name="Kuehl J.V."/>
            <person name="Boore J.L."/>
            <person name="Jansen R.K."/>
        </authorList>
    </citation>
    <scope>NUCLEOTIDE SEQUENCE [LARGE SCALE GENOMIC DNA]</scope>
</reference>